<sequence>MLTPEENLLLCRVEGDAPMGQMMRRHWTPVCLLEEVSEPDGTPVRARLFGEDLVVFRDTDGRVGVMDEYCPHRRVSLIYGRNENSGLRCLYHGWKMDVDGNVVEMVSEPAASNMCQKVKHTAYKTREWGGFVWAYMGPQDAIPEFVPPAWAPHEHVRVSIAKAIIPCNWAQILEGAIDSAHSSSLHSSDFVPARVGGAEATSKNWLRPSTDKAPRMQVERTSYGFRYAALRRPIQNAATSEYVRSTVFVAPATALIPPNNLYNVANINVPIDDTHTAFYFMAWGNPDNTPETETWRKFLGQQVGIDLDDSYRPLRNDGNRFFQDREAMKNGNFTGIKGFPNQDIAMWVTMGPIADRSDERLGASDLAVVEFRRVMLDALAAFQAGESAIGTGEKAIPSRICSFQAIVSKDIDWRDYQARYVWALDDANIVAEPDYEVHT</sequence>
<accession>Q05183</accession>
<gene>
    <name type="primary">pht3</name>
</gene>
<proteinExistence type="evidence at transcript level"/>
<dbReference type="EC" id="1.14.12.7"/>
<dbReference type="EMBL" id="D13229">
    <property type="protein sequence ID" value="BAA02511.1"/>
    <property type="molecule type" value="Genomic_DNA"/>
</dbReference>
<dbReference type="RefSeq" id="WP_060765959.1">
    <property type="nucleotide sequence ID" value="NZ_JAJSRK010000027.1"/>
</dbReference>
<dbReference type="SMR" id="Q05183"/>
<dbReference type="KEGG" id="ag:BAA02511"/>
<dbReference type="UniPathway" id="UPA00726">
    <property type="reaction ID" value="UER00728"/>
</dbReference>
<dbReference type="GO" id="GO:0051537">
    <property type="term" value="F:2 iron, 2 sulfur cluster binding"/>
    <property type="evidence" value="ECO:0007669"/>
    <property type="project" value="UniProtKB-KW"/>
</dbReference>
<dbReference type="GO" id="GO:0005506">
    <property type="term" value="F:iron ion binding"/>
    <property type="evidence" value="ECO:0007669"/>
    <property type="project" value="InterPro"/>
</dbReference>
<dbReference type="GO" id="GO:0018620">
    <property type="term" value="F:phthalate 4,5-dioxygenase activity"/>
    <property type="evidence" value="ECO:0007669"/>
    <property type="project" value="UniProtKB-EC"/>
</dbReference>
<dbReference type="GO" id="GO:0046239">
    <property type="term" value="P:phthalate catabolic process"/>
    <property type="evidence" value="ECO:0007669"/>
    <property type="project" value="UniProtKB-UniPathway"/>
</dbReference>
<dbReference type="CDD" id="cd03479">
    <property type="entry name" value="Rieske_RO_Alpha_PhDO_like"/>
    <property type="match status" value="1"/>
</dbReference>
<dbReference type="Gene3D" id="2.102.10.10">
    <property type="entry name" value="Rieske [2Fe-2S] iron-sulphur domain"/>
    <property type="match status" value="1"/>
</dbReference>
<dbReference type="InterPro" id="IPR050584">
    <property type="entry name" value="Cholesterol_7-desaturase"/>
</dbReference>
<dbReference type="InterPro" id="IPR045623">
    <property type="entry name" value="LigXa_C"/>
</dbReference>
<dbReference type="InterPro" id="IPR017941">
    <property type="entry name" value="Rieske_2Fe-2S"/>
</dbReference>
<dbReference type="InterPro" id="IPR036922">
    <property type="entry name" value="Rieske_2Fe-2S_sf"/>
</dbReference>
<dbReference type="InterPro" id="IPR015881">
    <property type="entry name" value="Ring-hydroxy_dOase_2Fe2S_BS"/>
</dbReference>
<dbReference type="PANTHER" id="PTHR21266:SF59">
    <property type="entry name" value="BLR4922 PROTEIN"/>
    <property type="match status" value="1"/>
</dbReference>
<dbReference type="PANTHER" id="PTHR21266">
    <property type="entry name" value="IRON-SULFUR DOMAIN CONTAINING PROTEIN"/>
    <property type="match status" value="1"/>
</dbReference>
<dbReference type="Pfam" id="PF19301">
    <property type="entry name" value="LigXa_C"/>
    <property type="match status" value="1"/>
</dbReference>
<dbReference type="Pfam" id="PF00355">
    <property type="entry name" value="Rieske"/>
    <property type="match status" value="1"/>
</dbReference>
<dbReference type="SUPFAM" id="SSF55961">
    <property type="entry name" value="Bet v1-like"/>
    <property type="match status" value="1"/>
</dbReference>
<dbReference type="SUPFAM" id="SSF50022">
    <property type="entry name" value="ISP domain"/>
    <property type="match status" value="1"/>
</dbReference>
<dbReference type="PROSITE" id="PS51296">
    <property type="entry name" value="RIESKE"/>
    <property type="match status" value="1"/>
</dbReference>
<dbReference type="PROSITE" id="PS00570">
    <property type="entry name" value="RING_HYDROXYL_ALPHA"/>
    <property type="match status" value="1"/>
</dbReference>
<reference key="1">
    <citation type="journal article" date="1992" name="J. Ferment. Bioeng.">
        <title>Genes in PHT plasmid encoding the initial degradation pathway of phthalate in Pseudomonas putida.</title>
        <authorList>
            <person name="Nomura Y."/>
            <person name="Nakagawa M."/>
            <person name="Ogawa N."/>
            <person name="Harashima S."/>
            <person name="Oshima Y."/>
        </authorList>
    </citation>
    <scope>NUCLEOTIDE SEQUENCE [GENOMIC DNA]</scope>
    <source>
        <strain>NMH102-2</strain>
    </source>
</reference>
<comment type="catalytic activity">
    <reaction>
        <text>phthalate + NADH + O2 + H(+) = cis-4,5-dihydroxycyclohexa-2,6-diene-1,2-dicarboxylate + NAD(+)</text>
        <dbReference type="Rhea" id="RHEA:17489"/>
        <dbReference type="ChEBI" id="CHEBI:15378"/>
        <dbReference type="ChEBI" id="CHEBI:15379"/>
        <dbReference type="ChEBI" id="CHEBI:17563"/>
        <dbReference type="ChEBI" id="CHEBI:57540"/>
        <dbReference type="ChEBI" id="CHEBI:57945"/>
        <dbReference type="ChEBI" id="CHEBI:58237"/>
        <dbReference type="EC" id="1.14.12.7"/>
    </reaction>
</comment>
<comment type="cofactor">
    <cofactor evidence="3">
        <name>[2Fe-2S] cluster</name>
        <dbReference type="ChEBI" id="CHEBI:190135"/>
    </cofactor>
    <text evidence="3">Binds 1 [2Fe-2S] cluster.</text>
</comment>
<comment type="cofactor">
    <cofactor evidence="3">
        <name>Fe cation</name>
        <dbReference type="ChEBI" id="CHEBI:24875"/>
    </cofactor>
    <text evidence="3">Binds 1 Fe cation.</text>
</comment>
<comment type="pathway">
    <text>Xenobiotic degradation; phthalate degradation; 3,4-dihydroxybenzoate from phthalate: step 1/3.</text>
</comment>
<comment type="subunit">
    <text>This dioxygenase system consists of two proteins: phthalate oxygenase and phthalate oxygenase reductase.</text>
</comment>
<comment type="induction">
    <text>Induced by phthalate and repressed by glucose.</text>
</comment>
<comment type="similarity">
    <text evidence="3">Belongs to the bacterial ring-hydroxylating dioxygenase alpha subunit family.</text>
</comment>
<organism>
    <name type="scientific">Pseudomonas putida</name>
    <name type="common">Arthrobacter siderocapsulatus</name>
    <dbReference type="NCBI Taxonomy" id="303"/>
    <lineage>
        <taxon>Bacteria</taxon>
        <taxon>Pseudomonadati</taxon>
        <taxon>Pseudomonadota</taxon>
        <taxon>Gammaproteobacteria</taxon>
        <taxon>Pseudomonadales</taxon>
        <taxon>Pseudomonadaceae</taxon>
        <taxon>Pseudomonas</taxon>
    </lineage>
</organism>
<name>PHT3_PSEPU</name>
<keyword id="KW-0001">2Fe-2S</keyword>
<keyword id="KW-0058">Aromatic hydrocarbons catabolism</keyword>
<keyword id="KW-0223">Dioxygenase</keyword>
<keyword id="KW-0408">Iron</keyword>
<keyword id="KW-0411">Iron-sulfur</keyword>
<keyword id="KW-0479">Metal-binding</keyword>
<keyword id="KW-0520">NAD</keyword>
<keyword id="KW-0560">Oxidoreductase</keyword>
<keyword id="KW-0614">Plasmid</keyword>
<geneLocation type="plasmid">
    <name>PHT</name>
</geneLocation>
<feature type="chain" id="PRO_0000085056" description="Phthalate 4,5-dioxygenase oxygenase subunit">
    <location>
        <begin position="1"/>
        <end position="439"/>
    </location>
</feature>
<feature type="domain" description="Rieske" evidence="2">
    <location>
        <begin position="27"/>
        <end position="134"/>
    </location>
</feature>
<feature type="binding site" evidence="2">
    <location>
        <position position="70"/>
    </location>
    <ligand>
        <name>[2Fe-2S] cluster</name>
        <dbReference type="ChEBI" id="CHEBI:190135"/>
    </ligand>
</feature>
<feature type="binding site" evidence="2">
    <location>
        <position position="72"/>
    </location>
    <ligand>
        <name>[2Fe-2S] cluster</name>
        <dbReference type="ChEBI" id="CHEBI:190135"/>
    </ligand>
</feature>
<feature type="binding site" evidence="2">
    <location>
        <position position="89"/>
    </location>
    <ligand>
        <name>[2Fe-2S] cluster</name>
        <dbReference type="ChEBI" id="CHEBI:190135"/>
    </ligand>
</feature>
<feature type="binding site" evidence="2">
    <location>
        <position position="92"/>
    </location>
    <ligand>
        <name>[2Fe-2S] cluster</name>
        <dbReference type="ChEBI" id="CHEBI:190135"/>
    </ligand>
</feature>
<feature type="binding site" evidence="1">
    <location>
        <position position="181"/>
    </location>
    <ligand>
        <name>Fe cation</name>
        <dbReference type="ChEBI" id="CHEBI:24875"/>
    </ligand>
</feature>
<feature type="binding site" evidence="1">
    <location>
        <position position="186"/>
    </location>
    <ligand>
        <name>Fe cation</name>
        <dbReference type="ChEBI" id="CHEBI:24875"/>
    </ligand>
</feature>
<evidence type="ECO:0000250" key="1"/>
<evidence type="ECO:0000255" key="2">
    <source>
        <dbReference type="PROSITE-ProRule" id="PRU00628"/>
    </source>
</evidence>
<evidence type="ECO:0000305" key="3"/>
<protein>
    <recommendedName>
        <fullName>Phthalate 4,5-dioxygenase oxygenase subunit</fullName>
        <ecNumber>1.14.12.7</ecNumber>
    </recommendedName>
</protein>